<reference key="1">
    <citation type="journal article" date="2006" name="Proc. Natl. Acad. Sci. U.S.A.">
        <title>The complete genome sequence of a chronic atrophic gastritis Helicobacter pylori strain: evolution during disease progression.</title>
        <authorList>
            <person name="Oh J.D."/>
            <person name="Kling-Baeckhed H."/>
            <person name="Giannakis M."/>
            <person name="Xu J."/>
            <person name="Fulton R.S."/>
            <person name="Fulton L.A."/>
            <person name="Cordum H.S."/>
            <person name="Wang C."/>
            <person name="Elliott G."/>
            <person name="Edwards J."/>
            <person name="Mardis E.R."/>
            <person name="Engstrand L.G."/>
            <person name="Gordon J.I."/>
        </authorList>
    </citation>
    <scope>NUCLEOTIDE SEQUENCE [LARGE SCALE GENOMIC DNA]</scope>
    <source>
        <strain>HPAG1</strain>
    </source>
</reference>
<sequence>MIELDINASDKSLSHRAVIFSLLAQKPCFVRNFLMGEDCLSSLEIAQNLGAKVENTAKNSFKITPPTAIKEPSKILNCNNSGTSMRLYSGLLSAQKGLFVLSGDNSLNARPMKRIIEPLKAFGARILGREDNHFAPLVIVGSPLKACNYESPIASAQVKSAFVLSALQAQGVSVYKENELSRNHTEIMLKSLGAKIHNQDGVLMISPLEKPLEAFDFTIANDPSSAFFFALACAITPKSRLLLKNVLLNPTRIEAFEALKKMGASIEYVIQSKDLEMIGDIYVEHAPLKAISIEQNIASLIDEIPALSIAMLFAKGKSMVKNAKDLRVKESDRIKAVISNFKALGIECEEFEDGFYIEGLEDISPLKQRFSQKKPPLIKSFNDHRIAMSFAILTLALPLEIDNLECANISFPQFKRLLNLFKKGSFNGN</sequence>
<dbReference type="EC" id="2.5.1.19" evidence="1"/>
<dbReference type="EMBL" id="CP000241">
    <property type="protein sequence ID" value="ABF85058.1"/>
    <property type="molecule type" value="Genomic_DNA"/>
</dbReference>
<dbReference type="RefSeq" id="WP_000570909.1">
    <property type="nucleotide sequence ID" value="NC_008086.1"/>
</dbReference>
<dbReference type="SMR" id="Q1CSL4"/>
<dbReference type="KEGG" id="hpa:HPAG1_0991"/>
<dbReference type="HOGENOM" id="CLU_024321_0_1_7"/>
<dbReference type="UniPathway" id="UPA00053">
    <property type="reaction ID" value="UER00089"/>
</dbReference>
<dbReference type="GO" id="GO:0005737">
    <property type="term" value="C:cytoplasm"/>
    <property type="evidence" value="ECO:0007669"/>
    <property type="project" value="UniProtKB-SubCell"/>
</dbReference>
<dbReference type="GO" id="GO:0003866">
    <property type="term" value="F:3-phosphoshikimate 1-carboxyvinyltransferase activity"/>
    <property type="evidence" value="ECO:0007669"/>
    <property type="project" value="UniProtKB-UniRule"/>
</dbReference>
<dbReference type="GO" id="GO:0008652">
    <property type="term" value="P:amino acid biosynthetic process"/>
    <property type="evidence" value="ECO:0007669"/>
    <property type="project" value="UniProtKB-KW"/>
</dbReference>
<dbReference type="GO" id="GO:0009073">
    <property type="term" value="P:aromatic amino acid family biosynthetic process"/>
    <property type="evidence" value="ECO:0007669"/>
    <property type="project" value="UniProtKB-KW"/>
</dbReference>
<dbReference type="GO" id="GO:0009423">
    <property type="term" value="P:chorismate biosynthetic process"/>
    <property type="evidence" value="ECO:0007669"/>
    <property type="project" value="UniProtKB-UniRule"/>
</dbReference>
<dbReference type="CDD" id="cd01556">
    <property type="entry name" value="EPSP_synthase"/>
    <property type="match status" value="1"/>
</dbReference>
<dbReference type="FunFam" id="3.65.10.10:FF:000005">
    <property type="entry name" value="3-phosphoshikimate 1-carboxyvinyltransferase"/>
    <property type="match status" value="1"/>
</dbReference>
<dbReference type="Gene3D" id="3.65.10.10">
    <property type="entry name" value="Enolpyruvate transferase domain"/>
    <property type="match status" value="2"/>
</dbReference>
<dbReference type="HAMAP" id="MF_00210">
    <property type="entry name" value="EPSP_synth"/>
    <property type="match status" value="1"/>
</dbReference>
<dbReference type="InterPro" id="IPR001986">
    <property type="entry name" value="Enolpyruvate_Tfrase_dom"/>
</dbReference>
<dbReference type="InterPro" id="IPR036968">
    <property type="entry name" value="Enolpyruvate_Tfrase_sf"/>
</dbReference>
<dbReference type="InterPro" id="IPR006264">
    <property type="entry name" value="EPSP_synthase"/>
</dbReference>
<dbReference type="InterPro" id="IPR023193">
    <property type="entry name" value="EPSP_synthase_CS"/>
</dbReference>
<dbReference type="InterPro" id="IPR013792">
    <property type="entry name" value="RNA3'P_cycl/enolpyr_Trfase_a/b"/>
</dbReference>
<dbReference type="NCBIfam" id="TIGR01356">
    <property type="entry name" value="aroA"/>
    <property type="match status" value="1"/>
</dbReference>
<dbReference type="PANTHER" id="PTHR21090">
    <property type="entry name" value="AROM/DEHYDROQUINATE SYNTHASE"/>
    <property type="match status" value="1"/>
</dbReference>
<dbReference type="PANTHER" id="PTHR21090:SF5">
    <property type="entry name" value="PENTAFUNCTIONAL AROM POLYPEPTIDE"/>
    <property type="match status" value="1"/>
</dbReference>
<dbReference type="Pfam" id="PF00275">
    <property type="entry name" value="EPSP_synthase"/>
    <property type="match status" value="1"/>
</dbReference>
<dbReference type="PIRSF" id="PIRSF000505">
    <property type="entry name" value="EPSPS"/>
    <property type="match status" value="1"/>
</dbReference>
<dbReference type="SUPFAM" id="SSF55205">
    <property type="entry name" value="EPT/RTPC-like"/>
    <property type="match status" value="1"/>
</dbReference>
<dbReference type="PROSITE" id="PS00104">
    <property type="entry name" value="EPSP_SYNTHASE_1"/>
    <property type="match status" value="1"/>
</dbReference>
<dbReference type="PROSITE" id="PS00885">
    <property type="entry name" value="EPSP_SYNTHASE_2"/>
    <property type="match status" value="1"/>
</dbReference>
<name>AROA_HELPH</name>
<evidence type="ECO:0000255" key="1">
    <source>
        <dbReference type="HAMAP-Rule" id="MF_00210"/>
    </source>
</evidence>
<organism>
    <name type="scientific">Helicobacter pylori (strain HPAG1)</name>
    <dbReference type="NCBI Taxonomy" id="357544"/>
    <lineage>
        <taxon>Bacteria</taxon>
        <taxon>Pseudomonadati</taxon>
        <taxon>Campylobacterota</taxon>
        <taxon>Epsilonproteobacteria</taxon>
        <taxon>Campylobacterales</taxon>
        <taxon>Helicobacteraceae</taxon>
        <taxon>Helicobacter</taxon>
    </lineage>
</organism>
<protein>
    <recommendedName>
        <fullName evidence="1">3-phosphoshikimate 1-carboxyvinyltransferase</fullName>
        <ecNumber evidence="1">2.5.1.19</ecNumber>
    </recommendedName>
    <alternativeName>
        <fullName evidence="1">5-enolpyruvylshikimate-3-phosphate synthase</fullName>
        <shortName evidence="1">EPSP synthase</shortName>
        <shortName evidence="1">EPSPS</shortName>
    </alternativeName>
</protein>
<gene>
    <name evidence="1" type="primary">aroA</name>
    <name type="ordered locus">HPAG1_0991</name>
</gene>
<accession>Q1CSL4</accession>
<feature type="chain" id="PRO_1000012443" description="3-phosphoshikimate 1-carboxyvinyltransferase">
    <location>
        <begin position="1"/>
        <end position="429"/>
    </location>
</feature>
<feature type="active site" description="Proton acceptor" evidence="1">
    <location>
        <position position="302"/>
    </location>
</feature>
<feature type="binding site" evidence="1">
    <location>
        <position position="11"/>
    </location>
    <ligand>
        <name>3-phosphoshikimate</name>
        <dbReference type="ChEBI" id="CHEBI:145989"/>
    </ligand>
</feature>
<feature type="binding site" evidence="1">
    <location>
        <position position="11"/>
    </location>
    <ligand>
        <name>phosphoenolpyruvate</name>
        <dbReference type="ChEBI" id="CHEBI:58702"/>
    </ligand>
</feature>
<feature type="binding site" evidence="1">
    <location>
        <position position="12"/>
    </location>
    <ligand>
        <name>3-phosphoshikimate</name>
        <dbReference type="ChEBI" id="CHEBI:145989"/>
    </ligand>
</feature>
<feature type="binding site" evidence="1">
    <location>
        <position position="16"/>
    </location>
    <ligand>
        <name>3-phosphoshikimate</name>
        <dbReference type="ChEBI" id="CHEBI:145989"/>
    </ligand>
</feature>
<feature type="binding site" evidence="1">
    <location>
        <position position="82"/>
    </location>
    <ligand>
        <name>phosphoenolpyruvate</name>
        <dbReference type="ChEBI" id="CHEBI:58702"/>
    </ligand>
</feature>
<feature type="binding site" evidence="1">
    <location>
        <position position="110"/>
    </location>
    <ligand>
        <name>phosphoenolpyruvate</name>
        <dbReference type="ChEBI" id="CHEBI:58702"/>
    </ligand>
</feature>
<feature type="binding site" evidence="1">
    <location>
        <position position="155"/>
    </location>
    <ligand>
        <name>3-phosphoshikimate</name>
        <dbReference type="ChEBI" id="CHEBI:145989"/>
    </ligand>
</feature>
<feature type="binding site" evidence="1">
    <location>
        <position position="157"/>
    </location>
    <ligand>
        <name>3-phosphoshikimate</name>
        <dbReference type="ChEBI" id="CHEBI:145989"/>
    </ligand>
</feature>
<feature type="binding site" evidence="1">
    <location>
        <position position="157"/>
    </location>
    <ligand>
        <name>phosphoenolpyruvate</name>
        <dbReference type="ChEBI" id="CHEBI:58702"/>
    </ligand>
</feature>
<feature type="binding site" evidence="1">
    <location>
        <position position="302"/>
    </location>
    <ligand>
        <name>3-phosphoshikimate</name>
        <dbReference type="ChEBI" id="CHEBI:145989"/>
    </ligand>
</feature>
<feature type="binding site" evidence="1">
    <location>
        <position position="329"/>
    </location>
    <ligand>
        <name>3-phosphoshikimate</name>
        <dbReference type="ChEBI" id="CHEBI:145989"/>
    </ligand>
</feature>
<feature type="binding site" evidence="1">
    <location>
        <position position="333"/>
    </location>
    <ligand>
        <name>phosphoenolpyruvate</name>
        <dbReference type="ChEBI" id="CHEBI:58702"/>
    </ligand>
</feature>
<feature type="binding site" evidence="1">
    <location>
        <position position="385"/>
    </location>
    <ligand>
        <name>phosphoenolpyruvate</name>
        <dbReference type="ChEBI" id="CHEBI:58702"/>
    </ligand>
</feature>
<proteinExistence type="inferred from homology"/>
<comment type="function">
    <text evidence="1">Catalyzes the transfer of the enolpyruvyl moiety of phosphoenolpyruvate (PEP) to the 5-hydroxyl of shikimate-3-phosphate (S3P) to produce enolpyruvyl shikimate-3-phosphate and inorganic phosphate.</text>
</comment>
<comment type="catalytic activity">
    <reaction evidence="1">
        <text>3-phosphoshikimate + phosphoenolpyruvate = 5-O-(1-carboxyvinyl)-3-phosphoshikimate + phosphate</text>
        <dbReference type="Rhea" id="RHEA:21256"/>
        <dbReference type="ChEBI" id="CHEBI:43474"/>
        <dbReference type="ChEBI" id="CHEBI:57701"/>
        <dbReference type="ChEBI" id="CHEBI:58702"/>
        <dbReference type="ChEBI" id="CHEBI:145989"/>
        <dbReference type="EC" id="2.5.1.19"/>
    </reaction>
    <physiologicalReaction direction="left-to-right" evidence="1">
        <dbReference type="Rhea" id="RHEA:21257"/>
    </physiologicalReaction>
</comment>
<comment type="pathway">
    <text evidence="1">Metabolic intermediate biosynthesis; chorismate biosynthesis; chorismate from D-erythrose 4-phosphate and phosphoenolpyruvate: step 6/7.</text>
</comment>
<comment type="subunit">
    <text evidence="1">Monomer.</text>
</comment>
<comment type="subcellular location">
    <subcellularLocation>
        <location evidence="1">Cytoplasm</location>
    </subcellularLocation>
</comment>
<comment type="similarity">
    <text evidence="1">Belongs to the EPSP synthase family.</text>
</comment>
<keyword id="KW-0028">Amino-acid biosynthesis</keyword>
<keyword id="KW-0057">Aromatic amino acid biosynthesis</keyword>
<keyword id="KW-0963">Cytoplasm</keyword>
<keyword id="KW-0808">Transferase</keyword>